<feature type="chain" id="PRO_0000252882" description="Fluoride-specific ion channel FluC">
    <location>
        <begin position="1"/>
        <end position="111"/>
    </location>
</feature>
<feature type="transmembrane region" description="Helical" evidence="1">
    <location>
        <begin position="2"/>
        <end position="22"/>
    </location>
</feature>
<feature type="transmembrane region" description="Helical" evidence="1">
    <location>
        <begin position="36"/>
        <end position="56"/>
    </location>
</feature>
<feature type="transmembrane region" description="Helical" evidence="1">
    <location>
        <begin position="71"/>
        <end position="91"/>
    </location>
</feature>
<feature type="binding site" evidence="1">
    <location>
        <position position="79"/>
    </location>
    <ligand>
        <name>Na(+)</name>
        <dbReference type="ChEBI" id="CHEBI:29101"/>
        <note>structural</note>
    </ligand>
</feature>
<feature type="binding site" evidence="1">
    <location>
        <position position="82"/>
    </location>
    <ligand>
        <name>Na(+)</name>
        <dbReference type="ChEBI" id="CHEBI:29101"/>
        <note>structural</note>
    </ligand>
</feature>
<accession>Q2A5R2</accession>
<organism>
    <name type="scientific">Francisella tularensis subsp. holarctica (strain LVS)</name>
    <dbReference type="NCBI Taxonomy" id="376619"/>
    <lineage>
        <taxon>Bacteria</taxon>
        <taxon>Pseudomonadati</taxon>
        <taxon>Pseudomonadota</taxon>
        <taxon>Gammaproteobacteria</taxon>
        <taxon>Thiotrichales</taxon>
        <taxon>Francisellaceae</taxon>
        <taxon>Francisella</taxon>
    </lineage>
</organism>
<dbReference type="EMBL" id="AM233362">
    <property type="protein sequence ID" value="CAJ78582.1"/>
    <property type="molecule type" value="Genomic_DNA"/>
</dbReference>
<dbReference type="SMR" id="Q2A5R2"/>
<dbReference type="KEGG" id="ftl:FTL_0141"/>
<dbReference type="Proteomes" id="UP000001944">
    <property type="component" value="Chromosome"/>
</dbReference>
<dbReference type="GO" id="GO:0005886">
    <property type="term" value="C:plasma membrane"/>
    <property type="evidence" value="ECO:0007669"/>
    <property type="project" value="UniProtKB-SubCell"/>
</dbReference>
<dbReference type="GO" id="GO:0062054">
    <property type="term" value="F:fluoride channel activity"/>
    <property type="evidence" value="ECO:0007669"/>
    <property type="project" value="UniProtKB-UniRule"/>
</dbReference>
<dbReference type="GO" id="GO:0046872">
    <property type="term" value="F:metal ion binding"/>
    <property type="evidence" value="ECO:0007669"/>
    <property type="project" value="UniProtKB-KW"/>
</dbReference>
<dbReference type="GO" id="GO:0140114">
    <property type="term" value="P:cellular detoxification of fluoride"/>
    <property type="evidence" value="ECO:0007669"/>
    <property type="project" value="UniProtKB-UniRule"/>
</dbReference>
<dbReference type="HAMAP" id="MF_00454">
    <property type="entry name" value="FluC"/>
    <property type="match status" value="1"/>
</dbReference>
<dbReference type="InterPro" id="IPR003691">
    <property type="entry name" value="FluC"/>
</dbReference>
<dbReference type="NCBIfam" id="TIGR00494">
    <property type="entry name" value="crcB"/>
    <property type="match status" value="1"/>
</dbReference>
<dbReference type="PANTHER" id="PTHR28259">
    <property type="entry name" value="FLUORIDE EXPORT PROTEIN 1-RELATED"/>
    <property type="match status" value="1"/>
</dbReference>
<dbReference type="PANTHER" id="PTHR28259:SF1">
    <property type="entry name" value="FLUORIDE EXPORT PROTEIN 1-RELATED"/>
    <property type="match status" value="1"/>
</dbReference>
<dbReference type="Pfam" id="PF02537">
    <property type="entry name" value="CRCB"/>
    <property type="match status" value="1"/>
</dbReference>
<protein>
    <recommendedName>
        <fullName evidence="1">Fluoride-specific ion channel FluC</fullName>
    </recommendedName>
</protein>
<keyword id="KW-0997">Cell inner membrane</keyword>
<keyword id="KW-1003">Cell membrane</keyword>
<keyword id="KW-0407">Ion channel</keyword>
<keyword id="KW-0406">Ion transport</keyword>
<keyword id="KW-0472">Membrane</keyword>
<keyword id="KW-0479">Metal-binding</keyword>
<keyword id="KW-1185">Reference proteome</keyword>
<keyword id="KW-0915">Sodium</keyword>
<keyword id="KW-0812">Transmembrane</keyword>
<keyword id="KW-1133">Transmembrane helix</keyword>
<keyword id="KW-0813">Transport</keyword>
<proteinExistence type="inferred from homology"/>
<evidence type="ECO:0000255" key="1">
    <source>
        <dbReference type="HAMAP-Rule" id="MF_00454"/>
    </source>
</evidence>
<name>FLUC_FRATH</name>
<comment type="function">
    <text evidence="1">Fluoride-specific ion channel. Important for reducing fluoride concentration in the cell, thus reducing its toxicity.</text>
</comment>
<comment type="catalytic activity">
    <reaction evidence="1">
        <text>fluoride(in) = fluoride(out)</text>
        <dbReference type="Rhea" id="RHEA:76159"/>
        <dbReference type="ChEBI" id="CHEBI:17051"/>
    </reaction>
    <physiologicalReaction direction="left-to-right" evidence="1">
        <dbReference type="Rhea" id="RHEA:76160"/>
    </physiologicalReaction>
</comment>
<comment type="activity regulation">
    <text evidence="1">Na(+) is not transported, but it plays an essential structural role and its presence is essential for fluoride channel function.</text>
</comment>
<comment type="subcellular location">
    <subcellularLocation>
        <location evidence="1">Cell inner membrane</location>
        <topology evidence="1">Multi-pass membrane protein</topology>
    </subcellularLocation>
</comment>
<comment type="similarity">
    <text evidence="1">Belongs to the fluoride channel Fluc/FEX (TC 1.A.43) family.</text>
</comment>
<sequence>MGLLLLLVGIGGGFGAMARFALTQATASISKQIPLGILLCNIIGSLIIGMMAAFLIETKLFNEDVSTYVRFLLVTGFLGGFTTFSSFSLDILNLLQRGEIFIAIGYIWLVS</sequence>
<gene>
    <name evidence="1" type="primary">fluC</name>
    <name evidence="1" type="synonym">crcB</name>
    <name type="ordered locus">FTL_0141</name>
</gene>
<reference key="1">
    <citation type="submission" date="2006-03" db="EMBL/GenBank/DDBJ databases">
        <title>Complete genome sequence of Francisella tularensis LVS (Live Vaccine Strain).</title>
        <authorList>
            <person name="Chain P."/>
            <person name="Larimer F."/>
            <person name="Land M."/>
            <person name="Stilwagen S."/>
            <person name="Larsson P."/>
            <person name="Bearden S."/>
            <person name="Chu M."/>
            <person name="Oyston P."/>
            <person name="Forsman M."/>
            <person name="Andersson S."/>
            <person name="Lindler L."/>
            <person name="Titball R."/>
            <person name="Garcia E."/>
        </authorList>
    </citation>
    <scope>NUCLEOTIDE SEQUENCE [LARGE SCALE GENOMIC DNA]</scope>
    <source>
        <strain>LVS</strain>
    </source>
</reference>